<evidence type="ECO:0000255" key="1">
    <source>
        <dbReference type="HAMAP-Rule" id="MF_00736"/>
    </source>
</evidence>
<evidence type="ECO:0000305" key="2"/>
<keyword id="KW-0488">Methylation</keyword>
<keyword id="KW-0687">Ribonucleoprotein</keyword>
<keyword id="KW-0689">Ribosomal protein</keyword>
<keyword id="KW-0694">RNA-binding</keyword>
<keyword id="KW-0699">rRNA-binding</keyword>
<gene>
    <name evidence="1" type="primary">rplK</name>
    <name type="ordered locus">RPE_3607</name>
</gene>
<name>RL11_RHOP5</name>
<feature type="chain" id="PRO_1000046249" description="Large ribosomal subunit protein uL11">
    <location>
        <begin position="1"/>
        <end position="142"/>
    </location>
</feature>
<sequence>MAKKVTGYLKLQVPAGAANPSPPIGPALGQRGLNIMEFCKNFNAQTQKEEKNTPIPVVITIYADRSFTFEMKTPPMSFFLKQAAKIQSGSKLPGRDVAGKVSSAQVREIAERKMKDLNCDSIESAMRMVEGSARSMGLQVEG</sequence>
<accession>Q07KJ7</accession>
<organism>
    <name type="scientific">Rhodopseudomonas palustris (strain BisA53)</name>
    <dbReference type="NCBI Taxonomy" id="316055"/>
    <lineage>
        <taxon>Bacteria</taxon>
        <taxon>Pseudomonadati</taxon>
        <taxon>Pseudomonadota</taxon>
        <taxon>Alphaproteobacteria</taxon>
        <taxon>Hyphomicrobiales</taxon>
        <taxon>Nitrobacteraceae</taxon>
        <taxon>Rhodopseudomonas</taxon>
    </lineage>
</organism>
<dbReference type="EMBL" id="CP000463">
    <property type="protein sequence ID" value="ABJ07537.1"/>
    <property type="molecule type" value="Genomic_DNA"/>
</dbReference>
<dbReference type="SMR" id="Q07KJ7"/>
<dbReference type="STRING" id="316055.RPE_3607"/>
<dbReference type="KEGG" id="rpe:RPE_3607"/>
<dbReference type="eggNOG" id="COG0080">
    <property type="taxonomic scope" value="Bacteria"/>
</dbReference>
<dbReference type="HOGENOM" id="CLU_074237_2_0_5"/>
<dbReference type="OrthoDB" id="9802408at2"/>
<dbReference type="GO" id="GO:0022625">
    <property type="term" value="C:cytosolic large ribosomal subunit"/>
    <property type="evidence" value="ECO:0007669"/>
    <property type="project" value="TreeGrafter"/>
</dbReference>
<dbReference type="GO" id="GO:0070180">
    <property type="term" value="F:large ribosomal subunit rRNA binding"/>
    <property type="evidence" value="ECO:0007669"/>
    <property type="project" value="UniProtKB-UniRule"/>
</dbReference>
<dbReference type="GO" id="GO:0003735">
    <property type="term" value="F:structural constituent of ribosome"/>
    <property type="evidence" value="ECO:0007669"/>
    <property type="project" value="InterPro"/>
</dbReference>
<dbReference type="GO" id="GO:0006412">
    <property type="term" value="P:translation"/>
    <property type="evidence" value="ECO:0007669"/>
    <property type="project" value="UniProtKB-UniRule"/>
</dbReference>
<dbReference type="CDD" id="cd00349">
    <property type="entry name" value="Ribosomal_L11"/>
    <property type="match status" value="1"/>
</dbReference>
<dbReference type="FunFam" id="1.10.10.250:FF:000001">
    <property type="entry name" value="50S ribosomal protein L11"/>
    <property type="match status" value="1"/>
</dbReference>
<dbReference type="FunFam" id="3.30.1550.10:FF:000001">
    <property type="entry name" value="50S ribosomal protein L11"/>
    <property type="match status" value="1"/>
</dbReference>
<dbReference type="Gene3D" id="1.10.10.250">
    <property type="entry name" value="Ribosomal protein L11, C-terminal domain"/>
    <property type="match status" value="1"/>
</dbReference>
<dbReference type="Gene3D" id="3.30.1550.10">
    <property type="entry name" value="Ribosomal protein L11/L12, N-terminal domain"/>
    <property type="match status" value="1"/>
</dbReference>
<dbReference type="HAMAP" id="MF_00736">
    <property type="entry name" value="Ribosomal_uL11"/>
    <property type="match status" value="1"/>
</dbReference>
<dbReference type="InterPro" id="IPR000911">
    <property type="entry name" value="Ribosomal_uL11"/>
</dbReference>
<dbReference type="InterPro" id="IPR006519">
    <property type="entry name" value="Ribosomal_uL11_bac-typ"/>
</dbReference>
<dbReference type="InterPro" id="IPR020783">
    <property type="entry name" value="Ribosomal_uL11_C"/>
</dbReference>
<dbReference type="InterPro" id="IPR036769">
    <property type="entry name" value="Ribosomal_uL11_C_sf"/>
</dbReference>
<dbReference type="InterPro" id="IPR020785">
    <property type="entry name" value="Ribosomal_uL11_CS"/>
</dbReference>
<dbReference type="InterPro" id="IPR020784">
    <property type="entry name" value="Ribosomal_uL11_N"/>
</dbReference>
<dbReference type="InterPro" id="IPR036796">
    <property type="entry name" value="Ribosomal_uL11_N_sf"/>
</dbReference>
<dbReference type="NCBIfam" id="TIGR01632">
    <property type="entry name" value="L11_bact"/>
    <property type="match status" value="1"/>
</dbReference>
<dbReference type="PANTHER" id="PTHR11661">
    <property type="entry name" value="60S RIBOSOMAL PROTEIN L12"/>
    <property type="match status" value="1"/>
</dbReference>
<dbReference type="PANTHER" id="PTHR11661:SF1">
    <property type="entry name" value="LARGE RIBOSOMAL SUBUNIT PROTEIN UL11M"/>
    <property type="match status" value="1"/>
</dbReference>
<dbReference type="Pfam" id="PF00298">
    <property type="entry name" value="Ribosomal_L11"/>
    <property type="match status" value="1"/>
</dbReference>
<dbReference type="Pfam" id="PF03946">
    <property type="entry name" value="Ribosomal_L11_N"/>
    <property type="match status" value="1"/>
</dbReference>
<dbReference type="SMART" id="SM00649">
    <property type="entry name" value="RL11"/>
    <property type="match status" value="1"/>
</dbReference>
<dbReference type="SUPFAM" id="SSF54747">
    <property type="entry name" value="Ribosomal L11/L12e N-terminal domain"/>
    <property type="match status" value="1"/>
</dbReference>
<dbReference type="SUPFAM" id="SSF46906">
    <property type="entry name" value="Ribosomal protein L11, C-terminal domain"/>
    <property type="match status" value="1"/>
</dbReference>
<dbReference type="PROSITE" id="PS00359">
    <property type="entry name" value="RIBOSOMAL_L11"/>
    <property type="match status" value="1"/>
</dbReference>
<reference key="1">
    <citation type="submission" date="2006-09" db="EMBL/GenBank/DDBJ databases">
        <title>Complete sequence of Rhodopseudomonas palustris BisA53.</title>
        <authorList>
            <consortium name="US DOE Joint Genome Institute"/>
            <person name="Copeland A."/>
            <person name="Lucas S."/>
            <person name="Lapidus A."/>
            <person name="Barry K."/>
            <person name="Detter J.C."/>
            <person name="Glavina del Rio T."/>
            <person name="Hammon N."/>
            <person name="Israni S."/>
            <person name="Dalin E."/>
            <person name="Tice H."/>
            <person name="Pitluck S."/>
            <person name="Chain P."/>
            <person name="Malfatti S."/>
            <person name="Shin M."/>
            <person name="Vergez L."/>
            <person name="Schmutz J."/>
            <person name="Larimer F."/>
            <person name="Land M."/>
            <person name="Hauser L."/>
            <person name="Pelletier D.A."/>
            <person name="Kyrpides N."/>
            <person name="Kim E."/>
            <person name="Harwood C.S."/>
            <person name="Oda Y."/>
            <person name="Richardson P."/>
        </authorList>
    </citation>
    <scope>NUCLEOTIDE SEQUENCE [LARGE SCALE GENOMIC DNA]</scope>
    <source>
        <strain>BisA53</strain>
    </source>
</reference>
<protein>
    <recommendedName>
        <fullName evidence="1">Large ribosomal subunit protein uL11</fullName>
    </recommendedName>
    <alternativeName>
        <fullName evidence="2">50S ribosomal protein L11</fullName>
    </alternativeName>
</protein>
<comment type="function">
    <text evidence="1">Forms part of the ribosomal stalk which helps the ribosome interact with GTP-bound translation factors.</text>
</comment>
<comment type="subunit">
    <text evidence="1">Part of the ribosomal stalk of the 50S ribosomal subunit. Interacts with L10 and the large rRNA to form the base of the stalk. L10 forms an elongated spine to which L12 dimers bind in a sequential fashion forming a multimeric L10(L12)X complex.</text>
</comment>
<comment type="PTM">
    <text evidence="1">One or more lysine residues are methylated.</text>
</comment>
<comment type="similarity">
    <text evidence="1">Belongs to the universal ribosomal protein uL11 family.</text>
</comment>
<proteinExistence type="inferred from homology"/>